<evidence type="ECO:0000255" key="1">
    <source>
        <dbReference type="HAMAP-Rule" id="MF_00181"/>
    </source>
</evidence>
<feature type="chain" id="PRO_0000165814" description="Probable cytosol aminopeptidase">
    <location>
        <begin position="1"/>
        <end position="500"/>
    </location>
</feature>
<feature type="active site" evidence="1">
    <location>
        <position position="273"/>
    </location>
</feature>
<feature type="active site" evidence="1">
    <location>
        <position position="347"/>
    </location>
</feature>
<feature type="binding site" evidence="1">
    <location>
        <position position="261"/>
    </location>
    <ligand>
        <name>Mn(2+)</name>
        <dbReference type="ChEBI" id="CHEBI:29035"/>
        <label>2</label>
    </ligand>
</feature>
<feature type="binding site" evidence="1">
    <location>
        <position position="266"/>
    </location>
    <ligand>
        <name>Mn(2+)</name>
        <dbReference type="ChEBI" id="CHEBI:29035"/>
        <label>1</label>
    </ligand>
</feature>
<feature type="binding site" evidence="1">
    <location>
        <position position="266"/>
    </location>
    <ligand>
        <name>Mn(2+)</name>
        <dbReference type="ChEBI" id="CHEBI:29035"/>
        <label>2</label>
    </ligand>
</feature>
<feature type="binding site" evidence="1">
    <location>
        <position position="284"/>
    </location>
    <ligand>
        <name>Mn(2+)</name>
        <dbReference type="ChEBI" id="CHEBI:29035"/>
        <label>2</label>
    </ligand>
</feature>
<feature type="binding site" evidence="1">
    <location>
        <position position="343"/>
    </location>
    <ligand>
        <name>Mn(2+)</name>
        <dbReference type="ChEBI" id="CHEBI:29035"/>
        <label>1</label>
    </ligand>
</feature>
<feature type="binding site" evidence="1">
    <location>
        <position position="345"/>
    </location>
    <ligand>
        <name>Mn(2+)</name>
        <dbReference type="ChEBI" id="CHEBI:29035"/>
        <label>1</label>
    </ligand>
</feature>
<feature type="binding site" evidence="1">
    <location>
        <position position="345"/>
    </location>
    <ligand>
        <name>Mn(2+)</name>
        <dbReference type="ChEBI" id="CHEBI:29035"/>
        <label>2</label>
    </ligand>
</feature>
<sequence length="500" mass="54922">MYSLQLFATEIPAMKITISKISPDFKTIVMGLFEDNETVNDGGVLQGKQVIDNIKQFSDFNGSFGEFFSTALPEEKNVIVVGLGKKDEWNENKELNIGGKIYCELSRLKIKKAAVLIEGSAANVAYGAFLRSFKFDKYKTKKDEKITEVEEITVLVKDEQLSNAERSFEHLRQEGESIFLARSFITEPPNILYPESYADHIKKELTKLGLEIEVLDKKQMEEKKMGALLGVAQGSSKEPKLVVIKWNGASKEQKPIAFVGKGITFDTGGVSLKPSRGMESMKYDMAGSATVVGVMHALAGRKAKVNAIGVVALAENAVGGNAQRPSDVVTSMSGQTIEVLNTDAEGRLILADALWYTQDRFSPKFMIDLATLTGAIVVALGNNEYAGLFSNNDELANRLIDAGNEVNEKLWRFPMNETYDKIIDSPIADVQNIAPAGSGGDSIMAAQFLQRFVNETCWAHLDIAGTAWHEKGTDICPRGAVGFGVRLLNKLVEKYYEAND</sequence>
<gene>
    <name evidence="1" type="primary">pepA</name>
    <name type="ordered locus">WD_0054</name>
</gene>
<keyword id="KW-0031">Aminopeptidase</keyword>
<keyword id="KW-0963">Cytoplasm</keyword>
<keyword id="KW-0378">Hydrolase</keyword>
<keyword id="KW-0464">Manganese</keyword>
<keyword id="KW-0479">Metal-binding</keyword>
<keyword id="KW-0645">Protease</keyword>
<name>AMPA_WOLPM</name>
<dbReference type="EC" id="3.4.11.1" evidence="1"/>
<dbReference type="EC" id="3.4.11.10" evidence="1"/>
<dbReference type="EMBL" id="AE017196">
    <property type="protein sequence ID" value="AAS13818.1"/>
    <property type="molecule type" value="Genomic_DNA"/>
</dbReference>
<dbReference type="SMR" id="Q73IU2"/>
<dbReference type="EnsemblBacteria" id="AAS13818">
    <property type="protein sequence ID" value="AAS13818"/>
    <property type="gene ID" value="WD_0054"/>
</dbReference>
<dbReference type="KEGG" id="wol:WD_0054"/>
<dbReference type="eggNOG" id="COG0260">
    <property type="taxonomic scope" value="Bacteria"/>
</dbReference>
<dbReference type="Proteomes" id="UP000008215">
    <property type="component" value="Chromosome"/>
</dbReference>
<dbReference type="GO" id="GO:0005737">
    <property type="term" value="C:cytoplasm"/>
    <property type="evidence" value="ECO:0007669"/>
    <property type="project" value="UniProtKB-SubCell"/>
</dbReference>
<dbReference type="GO" id="GO:0030145">
    <property type="term" value="F:manganese ion binding"/>
    <property type="evidence" value="ECO:0007669"/>
    <property type="project" value="UniProtKB-UniRule"/>
</dbReference>
<dbReference type="GO" id="GO:0070006">
    <property type="term" value="F:metalloaminopeptidase activity"/>
    <property type="evidence" value="ECO:0007669"/>
    <property type="project" value="InterPro"/>
</dbReference>
<dbReference type="GO" id="GO:0006508">
    <property type="term" value="P:proteolysis"/>
    <property type="evidence" value="ECO:0007669"/>
    <property type="project" value="UniProtKB-KW"/>
</dbReference>
<dbReference type="CDD" id="cd00433">
    <property type="entry name" value="Peptidase_M17"/>
    <property type="match status" value="1"/>
</dbReference>
<dbReference type="Gene3D" id="3.40.220.10">
    <property type="entry name" value="Leucine Aminopeptidase, subunit E, domain 1"/>
    <property type="match status" value="1"/>
</dbReference>
<dbReference type="Gene3D" id="3.40.630.10">
    <property type="entry name" value="Zn peptidases"/>
    <property type="match status" value="1"/>
</dbReference>
<dbReference type="HAMAP" id="MF_00181">
    <property type="entry name" value="Cytosol_peptidase_M17"/>
    <property type="match status" value="1"/>
</dbReference>
<dbReference type="InterPro" id="IPR011356">
    <property type="entry name" value="Leucine_aapep/pepB"/>
</dbReference>
<dbReference type="InterPro" id="IPR043472">
    <property type="entry name" value="Macro_dom-like"/>
</dbReference>
<dbReference type="InterPro" id="IPR000819">
    <property type="entry name" value="Peptidase_M17_C"/>
</dbReference>
<dbReference type="InterPro" id="IPR023042">
    <property type="entry name" value="Peptidase_M17_leu_NH2_pept"/>
</dbReference>
<dbReference type="InterPro" id="IPR008283">
    <property type="entry name" value="Peptidase_M17_N"/>
</dbReference>
<dbReference type="NCBIfam" id="NF002073">
    <property type="entry name" value="PRK00913.1-2"/>
    <property type="match status" value="1"/>
</dbReference>
<dbReference type="NCBIfam" id="NF002074">
    <property type="entry name" value="PRK00913.1-4"/>
    <property type="match status" value="1"/>
</dbReference>
<dbReference type="NCBIfam" id="NF002075">
    <property type="entry name" value="PRK00913.2-2"/>
    <property type="match status" value="1"/>
</dbReference>
<dbReference type="NCBIfam" id="NF002077">
    <property type="entry name" value="PRK00913.2-4"/>
    <property type="match status" value="1"/>
</dbReference>
<dbReference type="NCBIfam" id="NF002083">
    <property type="entry name" value="PRK00913.3-5"/>
    <property type="match status" value="1"/>
</dbReference>
<dbReference type="PANTHER" id="PTHR11963:SF23">
    <property type="entry name" value="CYTOSOL AMINOPEPTIDASE"/>
    <property type="match status" value="1"/>
</dbReference>
<dbReference type="PANTHER" id="PTHR11963">
    <property type="entry name" value="LEUCINE AMINOPEPTIDASE-RELATED"/>
    <property type="match status" value="1"/>
</dbReference>
<dbReference type="Pfam" id="PF00883">
    <property type="entry name" value="Peptidase_M17"/>
    <property type="match status" value="1"/>
</dbReference>
<dbReference type="Pfam" id="PF02789">
    <property type="entry name" value="Peptidase_M17_N"/>
    <property type="match status" value="1"/>
</dbReference>
<dbReference type="PRINTS" id="PR00481">
    <property type="entry name" value="LAMNOPPTDASE"/>
</dbReference>
<dbReference type="SUPFAM" id="SSF52949">
    <property type="entry name" value="Macro domain-like"/>
    <property type="match status" value="1"/>
</dbReference>
<dbReference type="SUPFAM" id="SSF53187">
    <property type="entry name" value="Zn-dependent exopeptidases"/>
    <property type="match status" value="1"/>
</dbReference>
<dbReference type="PROSITE" id="PS00631">
    <property type="entry name" value="CYTOSOL_AP"/>
    <property type="match status" value="1"/>
</dbReference>
<accession>Q73IU2</accession>
<organism>
    <name type="scientific">Wolbachia pipientis wMel</name>
    <dbReference type="NCBI Taxonomy" id="163164"/>
    <lineage>
        <taxon>Bacteria</taxon>
        <taxon>Pseudomonadati</taxon>
        <taxon>Pseudomonadota</taxon>
        <taxon>Alphaproteobacteria</taxon>
        <taxon>Rickettsiales</taxon>
        <taxon>Anaplasmataceae</taxon>
        <taxon>Wolbachieae</taxon>
        <taxon>Wolbachia</taxon>
    </lineage>
</organism>
<reference key="1">
    <citation type="journal article" date="2004" name="PLoS Biol.">
        <title>Phylogenomics of the reproductive parasite Wolbachia pipientis wMel: a streamlined genome overrun by mobile genetic elements.</title>
        <authorList>
            <person name="Wu M."/>
            <person name="Sun L.V."/>
            <person name="Vamathevan J.J."/>
            <person name="Riegler M."/>
            <person name="DeBoy R.T."/>
            <person name="Brownlie J.C."/>
            <person name="McGraw E.A."/>
            <person name="Martin W."/>
            <person name="Esser C."/>
            <person name="Ahmadinejad N."/>
            <person name="Wiegand C."/>
            <person name="Madupu R."/>
            <person name="Beanan M.J."/>
            <person name="Brinkac L.M."/>
            <person name="Daugherty S.C."/>
            <person name="Durkin A.S."/>
            <person name="Kolonay J.F."/>
            <person name="Nelson W.C."/>
            <person name="Mohamoud Y."/>
            <person name="Lee P."/>
            <person name="Berry K.J."/>
            <person name="Young M.B."/>
            <person name="Utterback T.R."/>
            <person name="Weidman J.F."/>
            <person name="Nierman W.C."/>
            <person name="Paulsen I.T."/>
            <person name="Nelson K.E."/>
            <person name="Tettelin H."/>
            <person name="O'Neill S.L."/>
            <person name="Eisen J.A."/>
        </authorList>
    </citation>
    <scope>NUCLEOTIDE SEQUENCE [LARGE SCALE GENOMIC DNA]</scope>
</reference>
<comment type="function">
    <text evidence="1">Presumably involved in the processing and regular turnover of intracellular proteins. Catalyzes the removal of unsubstituted N-terminal amino acids from various peptides.</text>
</comment>
<comment type="catalytic activity">
    <reaction evidence="1">
        <text>Release of an N-terminal amino acid, Xaa-|-Yaa-, in which Xaa is preferably Leu, but may be other amino acids including Pro although not Arg or Lys, and Yaa may be Pro. Amino acid amides and methyl esters are also readily hydrolyzed, but rates on arylamides are exceedingly low.</text>
        <dbReference type="EC" id="3.4.11.1"/>
    </reaction>
</comment>
<comment type="catalytic activity">
    <reaction evidence="1">
        <text>Release of an N-terminal amino acid, preferentially leucine, but not glutamic or aspartic acids.</text>
        <dbReference type="EC" id="3.4.11.10"/>
    </reaction>
</comment>
<comment type="cofactor">
    <cofactor evidence="1">
        <name>Mn(2+)</name>
        <dbReference type="ChEBI" id="CHEBI:29035"/>
    </cofactor>
    <text evidence="1">Binds 2 manganese ions per subunit.</text>
</comment>
<comment type="subcellular location">
    <subcellularLocation>
        <location evidence="1">Cytoplasm</location>
    </subcellularLocation>
</comment>
<comment type="similarity">
    <text evidence="1">Belongs to the peptidase M17 family.</text>
</comment>
<protein>
    <recommendedName>
        <fullName evidence="1">Probable cytosol aminopeptidase</fullName>
        <ecNumber evidence="1">3.4.11.1</ecNumber>
    </recommendedName>
    <alternativeName>
        <fullName evidence="1">Leucine aminopeptidase</fullName>
        <shortName evidence="1">LAP</shortName>
        <ecNumber evidence="1">3.4.11.10</ecNumber>
    </alternativeName>
    <alternativeName>
        <fullName evidence="1">Leucyl aminopeptidase</fullName>
    </alternativeName>
</protein>
<proteinExistence type="inferred from homology"/>